<name>NRAM_I02A2</name>
<evidence type="ECO:0000255" key="1">
    <source>
        <dbReference type="HAMAP-Rule" id="MF_04071"/>
    </source>
</evidence>
<proteinExistence type="inferred from homology"/>
<dbReference type="EC" id="3.2.1.18" evidence="1"/>
<dbReference type="EMBL" id="AY651458">
    <property type="protein sequence ID" value="AAT73340.2"/>
    <property type="molecule type" value="Genomic_RNA"/>
</dbReference>
<dbReference type="SMR" id="Q6DPK1"/>
<dbReference type="CAZy" id="GH34">
    <property type="family name" value="Glycoside Hydrolase Family 34"/>
</dbReference>
<dbReference type="GlyCosmos" id="Q6DPK1">
    <property type="glycosylation" value="3 sites, No reported glycans"/>
</dbReference>
<dbReference type="GO" id="GO:0020002">
    <property type="term" value="C:host cell plasma membrane"/>
    <property type="evidence" value="ECO:0007669"/>
    <property type="project" value="UniProtKB-SubCell"/>
</dbReference>
<dbReference type="GO" id="GO:0016020">
    <property type="term" value="C:membrane"/>
    <property type="evidence" value="ECO:0007669"/>
    <property type="project" value="UniProtKB-UniRule"/>
</dbReference>
<dbReference type="GO" id="GO:0055036">
    <property type="term" value="C:virion membrane"/>
    <property type="evidence" value="ECO:0007669"/>
    <property type="project" value="UniProtKB-SubCell"/>
</dbReference>
<dbReference type="GO" id="GO:0004308">
    <property type="term" value="F:exo-alpha-sialidase activity"/>
    <property type="evidence" value="ECO:0007669"/>
    <property type="project" value="UniProtKB-UniRule"/>
</dbReference>
<dbReference type="GO" id="GO:0046872">
    <property type="term" value="F:metal ion binding"/>
    <property type="evidence" value="ECO:0007669"/>
    <property type="project" value="UniProtKB-UniRule"/>
</dbReference>
<dbReference type="GO" id="GO:0005975">
    <property type="term" value="P:carbohydrate metabolic process"/>
    <property type="evidence" value="ECO:0007669"/>
    <property type="project" value="InterPro"/>
</dbReference>
<dbReference type="GO" id="GO:0046761">
    <property type="term" value="P:viral budding from plasma membrane"/>
    <property type="evidence" value="ECO:0007669"/>
    <property type="project" value="UniProtKB-UniRule"/>
</dbReference>
<dbReference type="CDD" id="cd15483">
    <property type="entry name" value="Influenza_NA"/>
    <property type="match status" value="1"/>
</dbReference>
<dbReference type="FunFam" id="2.120.10.10:FF:000001">
    <property type="entry name" value="Neuraminidase"/>
    <property type="match status" value="1"/>
</dbReference>
<dbReference type="Gene3D" id="2.120.10.10">
    <property type="match status" value="1"/>
</dbReference>
<dbReference type="HAMAP" id="MF_04071">
    <property type="entry name" value="INFV_NRAM"/>
    <property type="match status" value="1"/>
</dbReference>
<dbReference type="InterPro" id="IPR001860">
    <property type="entry name" value="Glyco_hydro_34"/>
</dbReference>
<dbReference type="InterPro" id="IPR033654">
    <property type="entry name" value="Sialidase_Influenza_A/B"/>
</dbReference>
<dbReference type="InterPro" id="IPR036278">
    <property type="entry name" value="Sialidase_sf"/>
</dbReference>
<dbReference type="Pfam" id="PF00064">
    <property type="entry name" value="Neur"/>
    <property type="match status" value="1"/>
</dbReference>
<dbReference type="SUPFAM" id="SSF50939">
    <property type="entry name" value="Sialidases"/>
    <property type="match status" value="1"/>
</dbReference>
<gene>
    <name evidence="1" type="primary">NA</name>
</gene>
<comment type="function">
    <text evidence="1">Catalyzes the removal of terminal sialic acid residues from viral and cellular glycoconjugates. Cleaves off the terminal sialic acids on the glycosylated HA during virus budding to facilitate virus release. Additionally helps virus spread through the circulation by further removing sialic acids from the cell surface. These cleavages prevent self-aggregation and ensure the efficient spread of the progeny virus from cell to cell. Otherwise, infection would be limited to one round of replication. Described as a receptor-destroying enzyme because it cleaves a terminal sialic acid from the cellular receptors. May facilitate viral invasion of the upper airways by cleaving the sialic acid moieties on the mucin of the airway epithelial cells. Likely to plays a role in the budding process through its association with lipid rafts during intracellular transport. May additionally display a raft-association independent effect on budding. Plays a role in the determination of host range restriction on replication and virulence. Sialidase activity in late endosome/lysosome traffic seems to enhance virus replication.</text>
</comment>
<comment type="catalytic activity">
    <reaction evidence="1">
        <text>Hydrolysis of alpha-(2-&gt;3)-, alpha-(2-&gt;6)-, alpha-(2-&gt;8)- glycosidic linkages of terminal sialic acid residues in oligosaccharides, glycoproteins, glycolipids, colominic acid and synthetic substrates.</text>
        <dbReference type="EC" id="3.2.1.18"/>
    </reaction>
</comment>
<comment type="cofactor">
    <cofactor evidence="1">
        <name>Ca(2+)</name>
        <dbReference type="ChEBI" id="CHEBI:29108"/>
    </cofactor>
</comment>
<comment type="activity regulation">
    <text evidence="1">Inhibited by the neuraminidase inhibitors zanamivir (Relenza) and oseltamivir (Tamiflu). These drugs interfere with the release of progeny virus from infected cells and are effective against all influenza strains. Resistance to neuraminidase inhibitors is quite rare.</text>
</comment>
<comment type="subunit">
    <text evidence="1">Homotetramer.</text>
</comment>
<comment type="subcellular location">
    <subcellularLocation>
        <location evidence="1">Virion membrane</location>
    </subcellularLocation>
    <subcellularLocation>
        <location evidence="1">Host apical cell membrane</location>
        <topology evidence="1">Single-pass type II membrane protein</topology>
    </subcellularLocation>
    <text evidence="1">Preferentially accumulates at the apical plasma membrane in infected polarized epithelial cells, which is the virus assembly site. Uses lipid rafts for cell surface transport and apical sorting. In the virion, forms a mushroom-shaped spike on the surface of the membrane.</text>
</comment>
<comment type="domain">
    <text evidence="1">Intact N-terminus is essential for virion morphogenesis. Possesses two apical sorting signals, one in the ectodomain, which is likely to be a glycan, and the other in the transmembrane domain. The transmembrane domain also plays a role in lipid raft association.</text>
</comment>
<comment type="PTM">
    <text evidence="1">N-glycosylated.</text>
</comment>
<comment type="miscellaneous">
    <text>The influenza A genome consist of 8 RNA segments. Genetic variation of hemagglutinin and/or neuraminidase genes results in the emergence of new influenza strains. The mechanism of variation can be the result of point mutations or the result of genetic reassortment between segments of two different strains.</text>
</comment>
<comment type="similarity">
    <text evidence="1">Belongs to the glycosyl hydrolase 34 family.</text>
</comment>
<feature type="chain" id="PRO_0000310935" description="Neuraminidase">
    <location>
        <begin position="1"/>
        <end position="449"/>
    </location>
</feature>
<feature type="topological domain" description="Intravirion" evidence="1">
    <location>
        <begin position="1"/>
        <end position="6"/>
    </location>
</feature>
<feature type="transmembrane region" description="Helical" evidence="1">
    <location>
        <begin position="7"/>
        <end position="27"/>
    </location>
</feature>
<feature type="topological domain" description="Virion surface" evidence="1">
    <location>
        <begin position="28"/>
        <end position="449"/>
    </location>
</feature>
<feature type="region of interest" description="Involved in apical transport and lipid raft association" evidence="1">
    <location>
        <begin position="11"/>
        <end position="33"/>
    </location>
</feature>
<feature type="region of interest" description="Hypervariable stalk region" evidence="1">
    <location>
        <begin position="36"/>
        <end position="70"/>
    </location>
</feature>
<feature type="region of interest" description="Head of neuraminidase" evidence="1">
    <location>
        <begin position="71"/>
        <end position="449"/>
    </location>
</feature>
<feature type="active site" description="Proton donor/acceptor" evidence="1">
    <location>
        <position position="131"/>
    </location>
</feature>
<feature type="active site" description="Nucleophile" evidence="1">
    <location>
        <position position="382"/>
    </location>
</feature>
<feature type="binding site" evidence="1">
    <location>
        <position position="98"/>
    </location>
    <ligand>
        <name>substrate</name>
    </ligand>
</feature>
<feature type="binding site" evidence="1">
    <location>
        <position position="132"/>
    </location>
    <ligand>
        <name>substrate</name>
    </ligand>
</feature>
<feature type="binding site" evidence="1">
    <location>
        <begin position="257"/>
        <end position="258"/>
    </location>
    <ligand>
        <name>substrate</name>
    </ligand>
</feature>
<feature type="binding site" evidence="1">
    <location>
        <position position="273"/>
    </location>
    <ligand>
        <name>substrate</name>
    </ligand>
</feature>
<feature type="binding site" evidence="1">
    <location>
        <position position="274"/>
    </location>
    <ligand>
        <name>Ca(2+)</name>
        <dbReference type="ChEBI" id="CHEBI:29108"/>
    </ligand>
</feature>
<feature type="binding site" evidence="1">
    <location>
        <position position="278"/>
    </location>
    <ligand>
        <name>Ca(2+)</name>
        <dbReference type="ChEBI" id="CHEBI:29108"/>
    </ligand>
</feature>
<feature type="binding site" evidence="1">
    <location>
        <position position="304"/>
    </location>
    <ligand>
        <name>Ca(2+)</name>
        <dbReference type="ChEBI" id="CHEBI:29108"/>
    </ligand>
</feature>
<feature type="binding site" evidence="1">
    <location>
        <position position="348"/>
    </location>
    <ligand>
        <name>substrate</name>
    </ligand>
</feature>
<feature type="glycosylation site" description="N-linked (GlcNAc...) asparagine; by host" evidence="1">
    <location>
        <position position="68"/>
    </location>
</feature>
<feature type="glycosylation site" description="N-linked (GlcNAc...) asparagine; by host" evidence="1">
    <location>
        <position position="126"/>
    </location>
</feature>
<feature type="glycosylation site" description="N-linked (GlcNAc...) asparagine; by host" evidence="1">
    <location>
        <position position="215"/>
    </location>
</feature>
<feature type="disulfide bond" evidence="1">
    <location>
        <begin position="72"/>
        <end position="397"/>
    </location>
</feature>
<feature type="disulfide bond" evidence="1">
    <location>
        <begin position="104"/>
        <end position="109"/>
    </location>
</feature>
<feature type="disulfide bond" evidence="1">
    <location>
        <begin position="164"/>
        <end position="211"/>
    </location>
</feature>
<feature type="disulfide bond" evidence="1">
    <location>
        <begin position="213"/>
        <end position="218"/>
    </location>
</feature>
<feature type="disulfide bond" evidence="1">
    <location>
        <begin position="259"/>
        <end position="272"/>
    </location>
</feature>
<feature type="disulfide bond" evidence="1">
    <location>
        <begin position="261"/>
        <end position="270"/>
    </location>
</feature>
<feature type="disulfide bond" evidence="1">
    <location>
        <begin position="298"/>
        <end position="315"/>
    </location>
</feature>
<feature type="disulfide bond" evidence="1">
    <location>
        <begin position="401"/>
        <end position="426"/>
    </location>
</feature>
<reference key="1">
    <citation type="journal article" date="2004" name="Nature">
        <title>Genesis of a highly pathogenic and potentially pandemic H5N1 influenza virus in eastern Asia.</title>
        <authorList>
            <person name="Li K.S."/>
            <person name="Guan Y."/>
            <person name="Wang J."/>
            <person name="Smith G.J.D."/>
            <person name="Xu K.M."/>
            <person name="Duan L."/>
            <person name="Rahardjo A.P."/>
            <person name="Puthavathana P."/>
            <person name="Buranathai C."/>
            <person name="Nguyen T.D."/>
            <person name="Estoepangestie A.T.S."/>
            <person name="Chaisingh A."/>
            <person name="Auewarakul P."/>
            <person name="Long H.T."/>
            <person name="Hanh N.T.H."/>
            <person name="Webby R.J."/>
            <person name="Poon L.L.M."/>
            <person name="Chen H."/>
            <person name="Shortridge K.F."/>
            <person name="Yuen K.Y."/>
            <person name="Webster R.G."/>
            <person name="Peiris J.S.M."/>
        </authorList>
    </citation>
    <scope>NUCLEOTIDE SEQUENCE [GENOMIC RNA]</scope>
</reference>
<reference key="2">
    <citation type="submission" date="2008-03" db="EMBL/GenBank/DDBJ databases">
        <authorList>
            <person name="Li K.S."/>
            <person name="Guan Y."/>
            <person name="Wang J."/>
            <person name="Smith G.J.D."/>
            <person name="Xu K.M."/>
            <person name="Duan L."/>
            <person name="Rahardjo A.P."/>
            <person name="Puthavathana P."/>
            <person name="Buranathai C."/>
            <person name="Nguyen T.D."/>
            <person name="Estoepangestie A.T.S."/>
            <person name="Chaisingh A."/>
            <person name="Auewarakul P."/>
            <person name="Long H.T."/>
            <person name="Hanh N.T.H."/>
            <person name="Lim W."/>
            <person name="Webby R.J."/>
            <person name="Poon L.L.M."/>
            <person name="Chen H."/>
            <person name="Shortridge K.F."/>
            <person name="Yuen K.Y."/>
            <person name="Webster R.G."/>
            <person name="Peiris J.S.M."/>
        </authorList>
    </citation>
    <scope>SEQUENCE REVISION</scope>
</reference>
<keyword id="KW-0106">Calcium</keyword>
<keyword id="KW-1015">Disulfide bond</keyword>
<keyword id="KW-0325">Glycoprotein</keyword>
<keyword id="KW-0326">Glycosidase</keyword>
<keyword id="KW-1032">Host cell membrane</keyword>
<keyword id="KW-1043">Host membrane</keyword>
<keyword id="KW-0378">Hydrolase</keyword>
<keyword id="KW-0472">Membrane</keyword>
<keyword id="KW-0479">Metal-binding</keyword>
<keyword id="KW-0735">Signal-anchor</keyword>
<keyword id="KW-0812">Transmembrane</keyword>
<keyword id="KW-1133">Transmembrane helix</keyword>
<keyword id="KW-0946">Virion</keyword>
<organismHost>
    <name type="scientific">Aves</name>
    <dbReference type="NCBI Taxonomy" id="8782"/>
</organismHost>
<organismHost>
    <name type="scientific">Felis catus</name>
    <name type="common">Cat</name>
    <name type="synonym">Felis silvestris catus</name>
    <dbReference type="NCBI Taxonomy" id="9685"/>
</organismHost>
<organismHost>
    <name type="scientific">Homo sapiens</name>
    <name type="common">Human</name>
    <dbReference type="NCBI Taxonomy" id="9606"/>
</organismHost>
<organismHost>
    <name type="scientific">Panthera pardus</name>
    <name type="common">Leopard</name>
    <name type="synonym">Felis pardus</name>
    <dbReference type="NCBI Taxonomy" id="9691"/>
</organismHost>
<organismHost>
    <name type="scientific">Panthera tigris</name>
    <name type="common">Tiger</name>
    <dbReference type="NCBI Taxonomy" id="9694"/>
</organismHost>
<organismHost>
    <name type="scientific">Sus scrofa</name>
    <name type="common">Pig</name>
    <dbReference type="NCBI Taxonomy" id="9823"/>
</organismHost>
<organism>
    <name type="scientific">Influenza A virus (strain A/Chicken/Hong Kong/31.2/2002 H5N1 genotype X1)</name>
    <dbReference type="NCBI Taxonomy" id="284169"/>
    <lineage>
        <taxon>Viruses</taxon>
        <taxon>Riboviria</taxon>
        <taxon>Orthornavirae</taxon>
        <taxon>Negarnaviricota</taxon>
        <taxon>Polyploviricotina</taxon>
        <taxon>Insthoviricetes</taxon>
        <taxon>Articulavirales</taxon>
        <taxon>Orthomyxoviridae</taxon>
        <taxon>Alphainfluenzavirus</taxon>
        <taxon>Alphainfluenzavirus influenzae</taxon>
        <taxon>Influenza A virus</taxon>
    </lineage>
</organism>
<accession>Q6DPK1</accession>
<sequence>MNPNQKIITIGSICMVIGIVSLMLQIGNIISIWVSHSIQTGNQHQAEPISNTNFLTEKAVASVTLAGNSSLCPISGWAVHSKDNSIRIGSKGDVFVIREPFISCSHLECRTFFLTQGALLNDKHSNGTVKDRSPHRTLMSCPVGEAPSPYNSRFESVAWSASACHDGTSWLTIGISGPDNGAVAVLKYNGIITDTIKSWRNNILRTQESECACVNGSCFTVMTDGPSNGQASYKIFKMEKGKVVKSVELDAPNYHYEECSCYPDAGEITCVCRDNWHGSNRPWVSFNQNLEYQIGYICSGVFGDNPRPNDGTGSCGPMSPNGAYGVKGFSFKYGNGVWIGRTKSTNSRSGFEMIWDPNGWTGTDSSFSVKQDIVAITDWSGYSGSFVQHPELTGLDCIRPCFWVELIRGRPKERTIWTSGSSISFCGVNSDTVAWSWPDGAELPFTIDK</sequence>
<protein>
    <recommendedName>
        <fullName evidence="1">Neuraminidase</fullName>
        <ecNumber evidence="1">3.2.1.18</ecNumber>
    </recommendedName>
</protein>